<keyword id="KW-0472">Membrane</keyword>
<keyword id="KW-0812">Transmembrane</keyword>
<keyword id="KW-1133">Transmembrane helix</keyword>
<organism>
    <name type="scientific">Saccharomyces cerevisiae (strain ATCC 204508 / S288c)</name>
    <name type="common">Baker's yeast</name>
    <dbReference type="NCBI Taxonomy" id="559292"/>
    <lineage>
        <taxon>Eukaryota</taxon>
        <taxon>Fungi</taxon>
        <taxon>Dikarya</taxon>
        <taxon>Ascomycota</taxon>
        <taxon>Saccharomycotina</taxon>
        <taxon>Saccharomycetes</taxon>
        <taxon>Saccharomycetales</taxon>
        <taxon>Saccharomycetaceae</taxon>
        <taxon>Saccharomyces</taxon>
    </lineage>
</organism>
<evidence type="ECO:0000255" key="1"/>
<evidence type="ECO:0000305" key="2"/>
<evidence type="ECO:0000305" key="3">
    <source>
    </source>
</evidence>
<evidence type="ECO:0000312" key="4">
    <source>
        <dbReference type="SGD" id="S000006374"/>
    </source>
</evidence>
<proteinExistence type="uncertain"/>
<gene>
    <name evidence="4" type="ordered locus">YPR170C</name>
</gene>
<comment type="subcellular location">
    <subcellularLocation>
        <location evidence="1">Membrane</location>
        <topology evidence="1">Single-pass membrane protein</topology>
    </subcellularLocation>
</comment>
<comment type="miscellaneous">
    <text evidence="2">Partially overlaps YPR169W-A and YPR170W-B.</text>
</comment>
<comment type="caution">
    <text evidence="3">Product of a dubious gene prediction unlikely to encode a functional protein. Because of that it is not part of the S.cerevisiae S288c complete/reference proteome set.</text>
</comment>
<accession>A0A023PYK2</accession>
<sequence>MTERITTPNADRTVQHHALPVDTTGLIFFAVFASSFVLYRRGSCFESYLFFSFPLSYFSNNRKKSRVQSDKQFFSVFKKNDPEQQHLYYAALMQFLTQLVESPTLFCVCTQ</sequence>
<reference key="1">
    <citation type="journal article" date="1997" name="Nature">
        <title>The nucleotide sequence of Saccharomyces cerevisiae chromosome XVI.</title>
        <authorList>
            <person name="Bussey H."/>
            <person name="Storms R.K."/>
            <person name="Ahmed A."/>
            <person name="Albermann K."/>
            <person name="Allen E."/>
            <person name="Ansorge W."/>
            <person name="Araujo R."/>
            <person name="Aparicio A."/>
            <person name="Barrell B.G."/>
            <person name="Badcock K."/>
            <person name="Benes V."/>
            <person name="Botstein D."/>
            <person name="Bowman S."/>
            <person name="Brueckner M."/>
            <person name="Carpenter J."/>
            <person name="Cherry J.M."/>
            <person name="Chung E."/>
            <person name="Churcher C.M."/>
            <person name="Coster F."/>
            <person name="Davis K."/>
            <person name="Davis R.W."/>
            <person name="Dietrich F.S."/>
            <person name="Delius H."/>
            <person name="DiPaolo T."/>
            <person name="Dubois E."/>
            <person name="Duesterhoeft A."/>
            <person name="Duncan M."/>
            <person name="Floeth M."/>
            <person name="Fortin N."/>
            <person name="Friesen J.D."/>
            <person name="Fritz C."/>
            <person name="Goffeau A."/>
            <person name="Hall J."/>
            <person name="Hebling U."/>
            <person name="Heumann K."/>
            <person name="Hilbert H."/>
            <person name="Hillier L.W."/>
            <person name="Hunicke-Smith S."/>
            <person name="Hyman R.W."/>
            <person name="Johnston M."/>
            <person name="Kalman S."/>
            <person name="Kleine K."/>
            <person name="Komp C."/>
            <person name="Kurdi O."/>
            <person name="Lashkari D."/>
            <person name="Lew H."/>
            <person name="Lin A."/>
            <person name="Lin D."/>
            <person name="Louis E.J."/>
            <person name="Marathe R."/>
            <person name="Messenguy F."/>
            <person name="Mewes H.-W."/>
            <person name="Mirtipati S."/>
            <person name="Moestl D."/>
            <person name="Mueller-Auer S."/>
            <person name="Namath A."/>
            <person name="Nentwich U."/>
            <person name="Oefner P."/>
            <person name="Pearson D."/>
            <person name="Petel F.X."/>
            <person name="Pohl T.M."/>
            <person name="Purnelle B."/>
            <person name="Rajandream M.A."/>
            <person name="Rechmann S."/>
            <person name="Rieger M."/>
            <person name="Riles L."/>
            <person name="Roberts D."/>
            <person name="Schaefer M."/>
            <person name="Scharfe M."/>
            <person name="Scherens B."/>
            <person name="Schramm S."/>
            <person name="Schroeder M."/>
            <person name="Sdicu A.-M."/>
            <person name="Tettelin H."/>
            <person name="Urrestarazu L.A."/>
            <person name="Ushinsky S."/>
            <person name="Vierendeels F."/>
            <person name="Vissers S."/>
            <person name="Voss H."/>
            <person name="Walsh S.V."/>
            <person name="Wambutt R."/>
            <person name="Wang Y."/>
            <person name="Wedler E."/>
            <person name="Wedler H."/>
            <person name="Winnett E."/>
            <person name="Zhong W.-W."/>
            <person name="Zollner A."/>
            <person name="Vo D.H."/>
            <person name="Hani J."/>
        </authorList>
    </citation>
    <scope>NUCLEOTIDE SEQUENCE [LARGE SCALE GENOMIC DNA]</scope>
    <source>
        <strain>ATCC 204508 / S288c</strain>
    </source>
</reference>
<reference key="2">
    <citation type="journal article" date="2014" name="G3 (Bethesda)">
        <title>The reference genome sequence of Saccharomyces cerevisiae: Then and now.</title>
        <authorList>
            <person name="Engel S.R."/>
            <person name="Dietrich F.S."/>
            <person name="Fisk D.G."/>
            <person name="Binkley G."/>
            <person name="Balakrishnan R."/>
            <person name="Costanzo M.C."/>
            <person name="Dwight S.S."/>
            <person name="Hitz B.C."/>
            <person name="Karra K."/>
            <person name="Nash R.S."/>
            <person name="Weng S."/>
            <person name="Wong E.D."/>
            <person name="Lloyd P."/>
            <person name="Skrzypek M.S."/>
            <person name="Miyasato S.R."/>
            <person name="Simison M."/>
            <person name="Cherry J.M."/>
        </authorList>
    </citation>
    <scope>GENOME REANNOTATION</scope>
    <source>
        <strain>ATCC 204508 / S288c</strain>
    </source>
</reference>
<protein>
    <recommendedName>
        <fullName>Putative uncharacterized membrane protein YPR170C</fullName>
    </recommendedName>
</protein>
<dbReference type="EMBL" id="KJ412300">
    <property type="protein sequence ID" value="AHX39343.1"/>
    <property type="molecule type" value="Genomic_DNA"/>
</dbReference>
<dbReference type="PIR" id="S69743">
    <property type="entry name" value="S69743"/>
</dbReference>
<dbReference type="SMR" id="A0A023PYK2"/>
<dbReference type="STRING" id="4932.YPR170C"/>
<dbReference type="PaxDb" id="4932-YPR170C"/>
<dbReference type="EnsemblFungi" id="YPR170C_mRNA">
    <property type="protein sequence ID" value="YPR170C"/>
    <property type="gene ID" value="YPR170C"/>
</dbReference>
<dbReference type="AGR" id="SGD:S000006374"/>
<dbReference type="SGD" id="S000006374">
    <property type="gene designation" value="YPR170C"/>
</dbReference>
<dbReference type="HOGENOM" id="CLU_2160378_0_0_1"/>
<dbReference type="GO" id="GO:0016020">
    <property type="term" value="C:membrane"/>
    <property type="evidence" value="ECO:0007669"/>
    <property type="project" value="UniProtKB-SubCell"/>
</dbReference>
<name>YP170_YEAST</name>
<feature type="chain" id="PRO_0000431063" description="Putative uncharacterized membrane protein YPR170C">
    <location>
        <begin position="1"/>
        <end position="111"/>
    </location>
</feature>
<feature type="transmembrane region" description="Helical" evidence="1">
    <location>
        <begin position="20"/>
        <end position="39"/>
    </location>
</feature>